<evidence type="ECO:0000255" key="1"/>
<evidence type="ECO:0000256" key="2">
    <source>
        <dbReference type="SAM" id="MobiDB-lite"/>
    </source>
</evidence>
<evidence type="ECO:0000269" key="3">
    <source>
    </source>
</evidence>
<evidence type="ECO:0000305" key="4"/>
<dbReference type="EMBL" id="Z34098">
    <property type="protein sequence ID" value="CAA83997.1"/>
    <property type="molecule type" value="Genomic_DNA"/>
</dbReference>
<dbReference type="EMBL" id="Z49489">
    <property type="protein sequence ID" value="CAA89511.1"/>
    <property type="molecule type" value="Genomic_DNA"/>
</dbReference>
<dbReference type="EMBL" id="BK006943">
    <property type="protein sequence ID" value="DAA08597.1"/>
    <property type="molecule type" value="Genomic_DNA"/>
</dbReference>
<dbReference type="PIR" id="S50771">
    <property type="entry name" value="S50771"/>
</dbReference>
<dbReference type="RefSeq" id="NP_012321.1">
    <property type="nucleotide sequence ID" value="NM_001181647.1"/>
</dbReference>
<dbReference type="SMR" id="P40886"/>
<dbReference type="BioGRID" id="33545">
    <property type="interactions" value="64"/>
</dbReference>
<dbReference type="DIP" id="DIP-8121N"/>
<dbReference type="FunCoup" id="P40886">
    <property type="interactions" value="1456"/>
</dbReference>
<dbReference type="IntAct" id="P40886">
    <property type="interactions" value="1"/>
</dbReference>
<dbReference type="MINT" id="P40886"/>
<dbReference type="STRING" id="4932.YJL214W"/>
<dbReference type="GlyCosmos" id="P40886">
    <property type="glycosylation" value="3 sites, No reported glycans"/>
</dbReference>
<dbReference type="GlyGen" id="P40886">
    <property type="glycosylation" value="3 sites"/>
</dbReference>
<dbReference type="PaxDb" id="4932-YJL214W"/>
<dbReference type="PeptideAtlas" id="P40886"/>
<dbReference type="EnsemblFungi" id="YJL214W_mRNA">
    <property type="protein sequence ID" value="YJL214W"/>
    <property type="gene ID" value="YJL214W"/>
</dbReference>
<dbReference type="GeneID" id="853216"/>
<dbReference type="KEGG" id="sce:YJL214W"/>
<dbReference type="AGR" id="SGD:S000003750"/>
<dbReference type="SGD" id="S000003750">
    <property type="gene designation" value="HXT8"/>
</dbReference>
<dbReference type="VEuPathDB" id="FungiDB:YJL214W"/>
<dbReference type="eggNOG" id="KOG0254">
    <property type="taxonomic scope" value="Eukaryota"/>
</dbReference>
<dbReference type="GeneTree" id="ENSGT00940000176280"/>
<dbReference type="HOGENOM" id="CLU_001265_30_1_1"/>
<dbReference type="InParanoid" id="P40886"/>
<dbReference type="OMA" id="GWLACER"/>
<dbReference type="OrthoDB" id="4044674at2759"/>
<dbReference type="BioCyc" id="YEAST:G3O-31641-MONOMER"/>
<dbReference type="BioGRID-ORCS" id="853216">
    <property type="hits" value="9 hits in 10 CRISPR screens"/>
</dbReference>
<dbReference type="PRO" id="PR:P40886"/>
<dbReference type="Proteomes" id="UP000002311">
    <property type="component" value="Chromosome X"/>
</dbReference>
<dbReference type="RNAct" id="P40886">
    <property type="molecule type" value="protein"/>
</dbReference>
<dbReference type="GO" id="GO:0071944">
    <property type="term" value="C:cell periphery"/>
    <property type="evidence" value="ECO:0007005"/>
    <property type="project" value="SGD"/>
</dbReference>
<dbReference type="GO" id="GO:0005886">
    <property type="term" value="C:plasma membrane"/>
    <property type="evidence" value="ECO:0000318"/>
    <property type="project" value="GO_Central"/>
</dbReference>
<dbReference type="GO" id="GO:0005351">
    <property type="term" value="F:carbohydrate:proton symporter activity"/>
    <property type="evidence" value="ECO:0000318"/>
    <property type="project" value="GO_Central"/>
</dbReference>
<dbReference type="GO" id="GO:0055056">
    <property type="term" value="F:D-glucose transmembrane transporter activity"/>
    <property type="evidence" value="ECO:0000315"/>
    <property type="project" value="SGD"/>
</dbReference>
<dbReference type="GO" id="GO:0005353">
    <property type="term" value="F:fructose transmembrane transporter activity"/>
    <property type="evidence" value="ECO:0000315"/>
    <property type="project" value="SGD"/>
</dbReference>
<dbReference type="GO" id="GO:0015578">
    <property type="term" value="F:mannose transmembrane transporter activity"/>
    <property type="evidence" value="ECO:0000315"/>
    <property type="project" value="SGD"/>
</dbReference>
<dbReference type="GO" id="GO:0008643">
    <property type="term" value="P:carbohydrate transport"/>
    <property type="evidence" value="ECO:0000318"/>
    <property type="project" value="GO_Central"/>
</dbReference>
<dbReference type="GO" id="GO:0008645">
    <property type="term" value="P:hexose transmembrane transport"/>
    <property type="evidence" value="ECO:0000315"/>
    <property type="project" value="SGD"/>
</dbReference>
<dbReference type="CDD" id="cd17356">
    <property type="entry name" value="MFS_HXT"/>
    <property type="match status" value="1"/>
</dbReference>
<dbReference type="FunFam" id="1.20.1250.20:FF:000044">
    <property type="entry name" value="Hexose transporter Hxt3p"/>
    <property type="match status" value="1"/>
</dbReference>
<dbReference type="Gene3D" id="1.20.1250.20">
    <property type="entry name" value="MFS general substrate transporter like domains"/>
    <property type="match status" value="1"/>
</dbReference>
<dbReference type="InterPro" id="IPR020846">
    <property type="entry name" value="MFS_dom"/>
</dbReference>
<dbReference type="InterPro" id="IPR005828">
    <property type="entry name" value="MFS_sugar_transport-like"/>
</dbReference>
<dbReference type="InterPro" id="IPR050360">
    <property type="entry name" value="MFS_Sugar_Transporters"/>
</dbReference>
<dbReference type="InterPro" id="IPR036259">
    <property type="entry name" value="MFS_trans_sf"/>
</dbReference>
<dbReference type="InterPro" id="IPR003663">
    <property type="entry name" value="Sugar/inositol_transpt"/>
</dbReference>
<dbReference type="InterPro" id="IPR005829">
    <property type="entry name" value="Sugar_transporter_CS"/>
</dbReference>
<dbReference type="NCBIfam" id="TIGR00879">
    <property type="entry name" value="SP"/>
    <property type="match status" value="1"/>
</dbReference>
<dbReference type="PANTHER" id="PTHR48022:SF75">
    <property type="entry name" value="GALACTOSE TRANSPORTER-RELATED"/>
    <property type="match status" value="1"/>
</dbReference>
<dbReference type="PANTHER" id="PTHR48022">
    <property type="entry name" value="PLASTIDIC GLUCOSE TRANSPORTER 4"/>
    <property type="match status" value="1"/>
</dbReference>
<dbReference type="Pfam" id="PF00083">
    <property type="entry name" value="Sugar_tr"/>
    <property type="match status" value="1"/>
</dbReference>
<dbReference type="PRINTS" id="PR00171">
    <property type="entry name" value="SUGRTRNSPORT"/>
</dbReference>
<dbReference type="SUPFAM" id="SSF103473">
    <property type="entry name" value="MFS general substrate transporter"/>
    <property type="match status" value="1"/>
</dbReference>
<dbReference type="PROSITE" id="PS50850">
    <property type="entry name" value="MFS"/>
    <property type="match status" value="1"/>
</dbReference>
<dbReference type="PROSITE" id="PS00216">
    <property type="entry name" value="SUGAR_TRANSPORT_1"/>
    <property type="match status" value="1"/>
</dbReference>
<dbReference type="PROSITE" id="PS00217">
    <property type="entry name" value="SUGAR_TRANSPORT_2"/>
    <property type="match status" value="1"/>
</dbReference>
<comment type="function">
    <text>Probable glucose transporter.</text>
</comment>
<comment type="subcellular location">
    <subcellularLocation>
        <location>Membrane</location>
        <topology>Multi-pass membrane protein</topology>
    </subcellularLocation>
</comment>
<comment type="miscellaneous">
    <text evidence="3">Present with 623 molecules/cell in log phase SD medium.</text>
</comment>
<comment type="similarity">
    <text evidence="4">Belongs to the major facilitator superfamily. Sugar transporter (TC 2.A.1.1) family.</text>
</comment>
<sequence>MTDRKTNLPEEPIFEEAEDDGCPSIENSSHLSVPTVEENKDFSEYNGEEAEEVVVPEKPASAYATVSIMCLCMAFGGFMSGWDTGTISGFVNQTDFLRRFGNYSHSKNTYYLSNVRTGLIVSIFNVGSAIGCLFLSKLGDIYGRCMGLIIVIVVYMVGIVIQIASIDKWYQYFIGRIIAGIGAGSISVLAPMLISETAPKHIRGTLLACWQLMVTFAIFLGYCTNYGTKTYSNSVQWRVPLGLCFAWAIIMIGGMTFVPESPRFLVQVGKIEQAKASFAKSNKLSVDDPAVVAEIDLLVAGVEAEEAMGTASWKELFSRKTKVFQRLTMTVMINSLQQLTGDNYFFYYGTTIFKSVGMNDSFETSIVLGIVNFASCFFSLYSVDKLGRRRCLLLGAATMTACMVIYASVGVTRLYPNGKSEPSSKGAGNCTIVFTCFYIFCFSCTWGPVCYVIISETFPLRVRSKCMSVATAANLLWGFLIGFFTPFITSAINFYYGYVFMGCLAFSYFYVFFFVPETKGLTLEEVDEMWMDGVLPWKSESWVPASRRDGDYDNEKLQHDEKPFYKRMF</sequence>
<name>HXT8_YEAST</name>
<organism>
    <name type="scientific">Saccharomyces cerevisiae (strain ATCC 204508 / S288c)</name>
    <name type="common">Baker's yeast</name>
    <dbReference type="NCBI Taxonomy" id="559292"/>
    <lineage>
        <taxon>Eukaryota</taxon>
        <taxon>Fungi</taxon>
        <taxon>Dikarya</taxon>
        <taxon>Ascomycota</taxon>
        <taxon>Saccharomycotina</taxon>
        <taxon>Saccharomycetes</taxon>
        <taxon>Saccharomycetales</taxon>
        <taxon>Saccharomycetaceae</taxon>
        <taxon>Saccharomyces</taxon>
    </lineage>
</organism>
<feature type="chain" id="PRO_0000050398" description="Hexose transporter HXT8">
    <location>
        <begin position="1"/>
        <end position="569"/>
    </location>
</feature>
<feature type="topological domain" description="Cytoplasmic" evidence="1">
    <location>
        <begin position="1"/>
        <end position="61"/>
    </location>
</feature>
<feature type="transmembrane region" description="Helical; Name=1" evidence="1">
    <location>
        <begin position="62"/>
        <end position="82"/>
    </location>
</feature>
<feature type="topological domain" description="Extracellular" evidence="1">
    <location>
        <begin position="83"/>
        <end position="118"/>
    </location>
</feature>
<feature type="transmembrane region" description="Helical; Name=2" evidence="1">
    <location>
        <begin position="119"/>
        <end position="139"/>
    </location>
</feature>
<feature type="topological domain" description="Cytoplasmic" evidence="1">
    <location>
        <begin position="140"/>
        <end position="145"/>
    </location>
</feature>
<feature type="transmembrane region" description="Helical; Name=3" evidence="1">
    <location>
        <begin position="146"/>
        <end position="166"/>
    </location>
</feature>
<feature type="topological domain" description="Extracellular" evidence="1">
    <location>
        <begin position="167"/>
        <end position="176"/>
    </location>
</feature>
<feature type="transmembrane region" description="Helical; Name=4" evidence="1">
    <location>
        <begin position="177"/>
        <end position="197"/>
    </location>
</feature>
<feature type="topological domain" description="Cytoplasmic" evidence="1">
    <location>
        <begin position="198"/>
        <end position="203"/>
    </location>
</feature>
<feature type="transmembrane region" description="Helical; Name=5" evidence="1">
    <location>
        <begin position="204"/>
        <end position="224"/>
    </location>
</feature>
<feature type="topological domain" description="Extracellular" evidence="1">
    <location>
        <begin position="225"/>
        <end position="238"/>
    </location>
</feature>
<feature type="transmembrane region" description="Helical; Name=6" evidence="1">
    <location>
        <begin position="239"/>
        <end position="259"/>
    </location>
</feature>
<feature type="topological domain" description="Cytoplasmic" evidence="1">
    <location>
        <begin position="260"/>
        <end position="342"/>
    </location>
</feature>
<feature type="transmembrane region" description="Helical; Name=7" evidence="1">
    <location>
        <begin position="343"/>
        <end position="359"/>
    </location>
</feature>
<feature type="topological domain" description="Extracellular" evidence="1">
    <location>
        <begin position="360"/>
        <end position="365"/>
    </location>
</feature>
<feature type="transmembrane region" description="Helical; Name=8" evidence="1">
    <location>
        <begin position="366"/>
        <end position="383"/>
    </location>
</feature>
<feature type="topological domain" description="Cytoplasmic" evidence="1">
    <location>
        <begin position="384"/>
        <end position="390"/>
    </location>
</feature>
<feature type="transmembrane region" description="Helical; Name=9" evidence="1">
    <location>
        <begin position="391"/>
        <end position="411"/>
    </location>
</feature>
<feature type="topological domain" description="Extracellular" evidence="1">
    <location>
        <begin position="412"/>
        <end position="433"/>
    </location>
</feature>
<feature type="transmembrane region" description="Helical; Name=10" evidence="1">
    <location>
        <begin position="434"/>
        <end position="454"/>
    </location>
</feature>
<feature type="topological domain" description="Cytoplasmic" evidence="1">
    <location>
        <begin position="455"/>
        <end position="471"/>
    </location>
</feature>
<feature type="transmembrane region" description="Helical; Name=11" evidence="1">
    <location>
        <begin position="472"/>
        <end position="492"/>
    </location>
</feature>
<feature type="topological domain" description="Extracellular" evidence="1">
    <location>
        <position position="493"/>
    </location>
</feature>
<feature type="transmembrane region" description="Helical; Name=12" evidence="1">
    <location>
        <begin position="494"/>
        <end position="514"/>
    </location>
</feature>
<feature type="topological domain" description="Cytoplasmic" evidence="1">
    <location>
        <begin position="515"/>
        <end position="569"/>
    </location>
</feature>
<feature type="region of interest" description="Disordered" evidence="2">
    <location>
        <begin position="1"/>
        <end position="38"/>
    </location>
</feature>
<feature type="compositionally biased region" description="Acidic residues" evidence="2">
    <location>
        <begin position="12"/>
        <end position="21"/>
    </location>
</feature>
<feature type="glycosylation site" description="N-linked (GlcNAc...) asparagine" evidence="1">
    <location>
        <position position="92"/>
    </location>
</feature>
<feature type="glycosylation site" description="N-linked (GlcNAc...) asparagine" evidence="1">
    <location>
        <position position="102"/>
    </location>
</feature>
<feature type="glycosylation site" description="N-linked (GlcNAc...) asparagine" evidence="1">
    <location>
        <position position="429"/>
    </location>
</feature>
<reference key="1">
    <citation type="journal article" date="1994" name="Yeast">
        <title>Sequence analysis of a 40.2 kb DNA fragment located near the left telomere of yeast chromosome X.</title>
        <authorList>
            <person name="Vandenbol M."/>
            <person name="Durand P."/>
            <person name="Bolle P.-A."/>
            <person name="Dion C."/>
            <person name="Portetelle D."/>
            <person name="Hilger F."/>
        </authorList>
    </citation>
    <scope>NUCLEOTIDE SEQUENCE [GENOMIC DNA]</scope>
    <source>
        <strain>ATCC 204508 / S288c</strain>
    </source>
</reference>
<reference key="2">
    <citation type="journal article" date="1996" name="EMBO J.">
        <title>Complete nucleotide sequence of Saccharomyces cerevisiae chromosome X.</title>
        <authorList>
            <person name="Galibert F."/>
            <person name="Alexandraki D."/>
            <person name="Baur A."/>
            <person name="Boles E."/>
            <person name="Chalwatzis N."/>
            <person name="Chuat J.-C."/>
            <person name="Coster F."/>
            <person name="Cziepluch C."/>
            <person name="de Haan M."/>
            <person name="Domdey H."/>
            <person name="Durand P."/>
            <person name="Entian K.-D."/>
            <person name="Gatius M."/>
            <person name="Goffeau A."/>
            <person name="Grivell L.A."/>
            <person name="Hennemann A."/>
            <person name="Herbert C.J."/>
            <person name="Heumann K."/>
            <person name="Hilger F."/>
            <person name="Hollenberg C.P."/>
            <person name="Huang M.-E."/>
            <person name="Jacq C."/>
            <person name="Jauniaux J.-C."/>
            <person name="Katsoulou C."/>
            <person name="Kirchrath L."/>
            <person name="Kleine K."/>
            <person name="Kordes E."/>
            <person name="Koetter P."/>
            <person name="Liebl S."/>
            <person name="Louis E.J."/>
            <person name="Manus V."/>
            <person name="Mewes H.-W."/>
            <person name="Miosga T."/>
            <person name="Obermaier B."/>
            <person name="Perea J."/>
            <person name="Pohl T.M."/>
            <person name="Portetelle D."/>
            <person name="Pujol A."/>
            <person name="Purnelle B."/>
            <person name="Ramezani Rad M."/>
            <person name="Rasmussen S.W."/>
            <person name="Rose M."/>
            <person name="Rossau R."/>
            <person name="Schaaff-Gerstenschlaeger I."/>
            <person name="Smits P.H.M."/>
            <person name="Scarcez T."/>
            <person name="Soriano N."/>
            <person name="To Van D."/>
            <person name="Tzermia M."/>
            <person name="Van Broekhoven A."/>
            <person name="Vandenbol M."/>
            <person name="Wedler H."/>
            <person name="von Wettstein D."/>
            <person name="Wambutt R."/>
            <person name="Zagulski M."/>
            <person name="Zollner A."/>
            <person name="Karpfinger-Hartl L."/>
        </authorList>
    </citation>
    <scope>NUCLEOTIDE SEQUENCE [LARGE SCALE GENOMIC DNA]</scope>
    <source>
        <strain>ATCC 204508 / S288c</strain>
    </source>
</reference>
<reference key="3">
    <citation type="journal article" date="2014" name="G3 (Bethesda)">
        <title>The reference genome sequence of Saccharomyces cerevisiae: Then and now.</title>
        <authorList>
            <person name="Engel S.R."/>
            <person name="Dietrich F.S."/>
            <person name="Fisk D.G."/>
            <person name="Binkley G."/>
            <person name="Balakrishnan R."/>
            <person name="Costanzo M.C."/>
            <person name="Dwight S.S."/>
            <person name="Hitz B.C."/>
            <person name="Karra K."/>
            <person name="Nash R.S."/>
            <person name="Weng S."/>
            <person name="Wong E.D."/>
            <person name="Lloyd P."/>
            <person name="Skrzypek M.S."/>
            <person name="Miyasato S.R."/>
            <person name="Simison M."/>
            <person name="Cherry J.M."/>
        </authorList>
    </citation>
    <scope>GENOME REANNOTATION</scope>
    <source>
        <strain>ATCC 204508 / S288c</strain>
    </source>
</reference>
<reference key="4">
    <citation type="journal article" date="2003" name="Nature">
        <title>Global analysis of protein expression in yeast.</title>
        <authorList>
            <person name="Ghaemmaghami S."/>
            <person name="Huh W.-K."/>
            <person name="Bower K."/>
            <person name="Howson R.W."/>
            <person name="Belle A."/>
            <person name="Dephoure N."/>
            <person name="O'Shea E.K."/>
            <person name="Weissman J.S."/>
        </authorList>
    </citation>
    <scope>LEVEL OF PROTEIN EXPRESSION [LARGE SCALE ANALYSIS]</scope>
</reference>
<reference key="5">
    <citation type="journal article" date="2006" name="Proc. Natl. Acad. Sci. U.S.A.">
        <title>A global topology map of the Saccharomyces cerevisiae membrane proteome.</title>
        <authorList>
            <person name="Kim H."/>
            <person name="Melen K."/>
            <person name="Oesterberg M."/>
            <person name="von Heijne G."/>
        </authorList>
    </citation>
    <scope>TOPOLOGY [LARGE SCALE ANALYSIS]</scope>
    <source>
        <strain>ATCC 208353 / W303-1A</strain>
    </source>
</reference>
<accession>P40886</accession>
<accession>D6VVY1</accession>
<gene>
    <name type="primary">HXT8</name>
    <name type="ordered locus">YJL214W</name>
    <name type="ORF">HRA569</name>
    <name type="ORF">J0232</name>
</gene>
<protein>
    <recommendedName>
        <fullName>Hexose transporter HXT8</fullName>
    </recommendedName>
</protein>
<proteinExistence type="evidence at protein level"/>
<keyword id="KW-0325">Glycoprotein</keyword>
<keyword id="KW-0472">Membrane</keyword>
<keyword id="KW-1185">Reference proteome</keyword>
<keyword id="KW-0677">Repeat</keyword>
<keyword id="KW-0762">Sugar transport</keyword>
<keyword id="KW-0812">Transmembrane</keyword>
<keyword id="KW-1133">Transmembrane helix</keyword>
<keyword id="KW-0813">Transport</keyword>